<feature type="chain" id="PRO_1000048228" description="Cytidylate kinase">
    <location>
        <begin position="1"/>
        <end position="230"/>
    </location>
</feature>
<feature type="binding site" evidence="1">
    <location>
        <begin position="10"/>
        <end position="18"/>
    </location>
    <ligand>
        <name>ATP</name>
        <dbReference type="ChEBI" id="CHEBI:30616"/>
    </ligand>
</feature>
<organism>
    <name type="scientific">Leptospira borgpetersenii serovar Hardjo-bovis (strain JB197)</name>
    <dbReference type="NCBI Taxonomy" id="355277"/>
    <lineage>
        <taxon>Bacteria</taxon>
        <taxon>Pseudomonadati</taxon>
        <taxon>Spirochaetota</taxon>
        <taxon>Spirochaetia</taxon>
        <taxon>Leptospirales</taxon>
        <taxon>Leptospiraceae</taxon>
        <taxon>Leptospira</taxon>
    </lineage>
</organism>
<protein>
    <recommendedName>
        <fullName evidence="1">Cytidylate kinase</fullName>
        <shortName evidence="1">CK</shortName>
        <ecNumber evidence="1">2.7.4.25</ecNumber>
    </recommendedName>
    <alternativeName>
        <fullName evidence="1">Cytidine monophosphate kinase</fullName>
        <shortName evidence="1">CMP kinase</shortName>
    </alternativeName>
</protein>
<proteinExistence type="inferred from homology"/>
<gene>
    <name evidence="1" type="primary">cmk</name>
    <name type="ordered locus">LBJ_0935</name>
</gene>
<name>KCY_LEPBJ</name>
<evidence type="ECO:0000255" key="1">
    <source>
        <dbReference type="HAMAP-Rule" id="MF_00238"/>
    </source>
</evidence>
<reference key="1">
    <citation type="journal article" date="2006" name="Proc. Natl. Acad. Sci. U.S.A.">
        <title>Genome reduction in Leptospira borgpetersenii reflects limited transmission potential.</title>
        <authorList>
            <person name="Bulach D.M."/>
            <person name="Zuerner R.L."/>
            <person name="Wilson P."/>
            <person name="Seemann T."/>
            <person name="McGrath A."/>
            <person name="Cullen P.A."/>
            <person name="Davis J."/>
            <person name="Johnson M."/>
            <person name="Kuczek E."/>
            <person name="Alt D.P."/>
            <person name="Peterson-Burch B."/>
            <person name="Coppel R.L."/>
            <person name="Rood J.I."/>
            <person name="Davies J.K."/>
            <person name="Adler B."/>
        </authorList>
    </citation>
    <scope>NUCLEOTIDE SEQUENCE [LARGE SCALE GENOMIC DNA]</scope>
    <source>
        <strain>JB197</strain>
    </source>
</reference>
<dbReference type="EC" id="2.7.4.25" evidence="1"/>
<dbReference type="EMBL" id="CP000350">
    <property type="protein sequence ID" value="ABJ75579.1"/>
    <property type="molecule type" value="Genomic_DNA"/>
</dbReference>
<dbReference type="RefSeq" id="WP_011671658.1">
    <property type="nucleotide sequence ID" value="NC_008510.1"/>
</dbReference>
<dbReference type="SMR" id="Q04U41"/>
<dbReference type="KEGG" id="lbj:LBJ_0935"/>
<dbReference type="HOGENOM" id="CLU_079959_0_2_12"/>
<dbReference type="Proteomes" id="UP000000656">
    <property type="component" value="Chromosome 1"/>
</dbReference>
<dbReference type="GO" id="GO:0005829">
    <property type="term" value="C:cytosol"/>
    <property type="evidence" value="ECO:0007669"/>
    <property type="project" value="TreeGrafter"/>
</dbReference>
<dbReference type="GO" id="GO:0005524">
    <property type="term" value="F:ATP binding"/>
    <property type="evidence" value="ECO:0007669"/>
    <property type="project" value="UniProtKB-UniRule"/>
</dbReference>
<dbReference type="GO" id="GO:0036430">
    <property type="term" value="F:CMP kinase activity"/>
    <property type="evidence" value="ECO:0007669"/>
    <property type="project" value="RHEA"/>
</dbReference>
<dbReference type="GO" id="GO:0036431">
    <property type="term" value="F:dCMP kinase activity"/>
    <property type="evidence" value="ECO:0007669"/>
    <property type="project" value="RHEA"/>
</dbReference>
<dbReference type="GO" id="GO:0015949">
    <property type="term" value="P:nucleobase-containing small molecule interconversion"/>
    <property type="evidence" value="ECO:0007669"/>
    <property type="project" value="TreeGrafter"/>
</dbReference>
<dbReference type="GO" id="GO:0006220">
    <property type="term" value="P:pyrimidine nucleotide metabolic process"/>
    <property type="evidence" value="ECO:0007669"/>
    <property type="project" value="UniProtKB-UniRule"/>
</dbReference>
<dbReference type="CDD" id="cd02020">
    <property type="entry name" value="CMPK"/>
    <property type="match status" value="1"/>
</dbReference>
<dbReference type="FunFam" id="3.40.50.300:FF:001608">
    <property type="entry name" value="Cytidylate kinase"/>
    <property type="match status" value="1"/>
</dbReference>
<dbReference type="Gene3D" id="3.40.50.300">
    <property type="entry name" value="P-loop containing nucleotide triphosphate hydrolases"/>
    <property type="match status" value="1"/>
</dbReference>
<dbReference type="HAMAP" id="MF_00238">
    <property type="entry name" value="Cytidyl_kinase_type1"/>
    <property type="match status" value="1"/>
</dbReference>
<dbReference type="InterPro" id="IPR003136">
    <property type="entry name" value="Cytidylate_kin"/>
</dbReference>
<dbReference type="InterPro" id="IPR011994">
    <property type="entry name" value="Cytidylate_kinase_dom"/>
</dbReference>
<dbReference type="InterPro" id="IPR027417">
    <property type="entry name" value="P-loop_NTPase"/>
</dbReference>
<dbReference type="NCBIfam" id="TIGR00017">
    <property type="entry name" value="cmk"/>
    <property type="match status" value="1"/>
</dbReference>
<dbReference type="PANTHER" id="PTHR21299:SF2">
    <property type="entry name" value="CYTIDYLATE KINASE"/>
    <property type="match status" value="1"/>
</dbReference>
<dbReference type="PANTHER" id="PTHR21299">
    <property type="entry name" value="CYTIDYLATE KINASE/PANTOATE-BETA-ALANINE LIGASE"/>
    <property type="match status" value="1"/>
</dbReference>
<dbReference type="Pfam" id="PF02224">
    <property type="entry name" value="Cytidylate_kin"/>
    <property type="match status" value="1"/>
</dbReference>
<dbReference type="SUPFAM" id="SSF52540">
    <property type="entry name" value="P-loop containing nucleoside triphosphate hydrolases"/>
    <property type="match status" value="1"/>
</dbReference>
<sequence length="230" mass="26303">MNENVIALDGPAGSGKSTVARQIAERIGFNYLDTGAFYRALTLYLFRLHGNSPNTESFADWVKTSEAERSLSDIRILCEFSAGKENRIFLNGEEVSLAIRTPEITREIKHIANRRIYRNFVNQELHSLAKLHKLIIDGRDIGTEVFPDAKFKFYLTASSKVRAERRFLQLQEQGIEADRDEIEKEIILRDKSDMEREIAPLYQANDAILIDTDILSKNSVISKILKILDR</sequence>
<comment type="catalytic activity">
    <reaction evidence="1">
        <text>CMP + ATP = CDP + ADP</text>
        <dbReference type="Rhea" id="RHEA:11600"/>
        <dbReference type="ChEBI" id="CHEBI:30616"/>
        <dbReference type="ChEBI" id="CHEBI:58069"/>
        <dbReference type="ChEBI" id="CHEBI:60377"/>
        <dbReference type="ChEBI" id="CHEBI:456216"/>
        <dbReference type="EC" id="2.7.4.25"/>
    </reaction>
</comment>
<comment type="catalytic activity">
    <reaction evidence="1">
        <text>dCMP + ATP = dCDP + ADP</text>
        <dbReference type="Rhea" id="RHEA:25094"/>
        <dbReference type="ChEBI" id="CHEBI:30616"/>
        <dbReference type="ChEBI" id="CHEBI:57566"/>
        <dbReference type="ChEBI" id="CHEBI:58593"/>
        <dbReference type="ChEBI" id="CHEBI:456216"/>
        <dbReference type="EC" id="2.7.4.25"/>
    </reaction>
</comment>
<comment type="subcellular location">
    <subcellularLocation>
        <location evidence="1">Cytoplasm</location>
    </subcellularLocation>
</comment>
<comment type="similarity">
    <text evidence="1">Belongs to the cytidylate kinase family. Type 1 subfamily.</text>
</comment>
<keyword id="KW-0067">ATP-binding</keyword>
<keyword id="KW-0963">Cytoplasm</keyword>
<keyword id="KW-0418">Kinase</keyword>
<keyword id="KW-0547">Nucleotide-binding</keyword>
<keyword id="KW-0808">Transferase</keyword>
<accession>Q04U41</accession>